<evidence type="ECO:0000255" key="1">
    <source>
        <dbReference type="PROSITE-ProRule" id="PRU00541"/>
    </source>
</evidence>
<evidence type="ECO:0000255" key="2">
    <source>
        <dbReference type="PROSITE-ProRule" id="PRU00542"/>
    </source>
</evidence>
<evidence type="ECO:0000255" key="3">
    <source>
        <dbReference type="PROSITE-ProRule" id="PRU00552"/>
    </source>
</evidence>
<evidence type="ECO:0000269" key="4">
    <source>
    </source>
</evidence>
<evidence type="ECO:0000269" key="5">
    <source>
    </source>
</evidence>
<evidence type="ECO:0000269" key="6">
    <source>
    </source>
</evidence>
<evidence type="ECO:0000269" key="7">
    <source>
    </source>
</evidence>
<evidence type="ECO:0000269" key="8">
    <source>
    </source>
</evidence>
<evidence type="ECO:0000269" key="9">
    <source>
    </source>
</evidence>
<evidence type="ECO:0000269" key="10">
    <source>
    </source>
</evidence>
<evidence type="ECO:0000269" key="11">
    <source>
    </source>
</evidence>
<evidence type="ECO:0000269" key="12">
    <source>
    </source>
</evidence>
<evidence type="ECO:0000269" key="13">
    <source>
    </source>
</evidence>
<evidence type="ECO:0000269" key="14">
    <source>
    </source>
</evidence>
<evidence type="ECO:0000269" key="15">
    <source>
    </source>
</evidence>
<evidence type="ECO:0000269" key="16">
    <source>
    </source>
</evidence>
<evidence type="ECO:0000269" key="17">
    <source>
    </source>
</evidence>
<evidence type="ECO:0000269" key="18">
    <source>
    </source>
</evidence>
<evidence type="ECO:0000269" key="19">
    <source>
    </source>
</evidence>
<evidence type="ECO:0000269" key="20">
    <source>
    </source>
</evidence>
<evidence type="ECO:0000269" key="21">
    <source>
    </source>
</evidence>
<evidence type="ECO:0000269" key="22">
    <source>
    </source>
</evidence>
<evidence type="ECO:0000303" key="23">
    <source>
    </source>
</evidence>
<evidence type="ECO:0000305" key="24"/>
<evidence type="ECO:0000305" key="25">
    <source>
    </source>
</evidence>
<evidence type="ECO:0007744" key="26">
    <source>
        <dbReference type="PDB" id="6S8R"/>
    </source>
</evidence>
<evidence type="ECO:0007829" key="27">
    <source>
        <dbReference type="PDB" id="6S8R"/>
    </source>
</evidence>
<feature type="chain" id="PRO_0000054982" description="ATP-dependent RNA helicase me31b">
    <location>
        <begin position="1"/>
        <end position="459"/>
    </location>
</feature>
<feature type="domain" description="Helicase ATP-binding" evidence="1">
    <location>
        <begin position="89"/>
        <end position="259"/>
    </location>
</feature>
<feature type="domain" description="Helicase C-terminal" evidence="2">
    <location>
        <begin position="269"/>
        <end position="429"/>
    </location>
</feature>
<feature type="region of interest" description="RecA-like domain 1" evidence="23">
    <location>
        <begin position="1"/>
        <end position="267"/>
    </location>
</feature>
<feature type="region of interest" description="Gyf binding" evidence="22">
    <location>
        <begin position="264"/>
        <end position="431"/>
    </location>
</feature>
<feature type="region of interest" description="RecA-like domain 2" evidence="22">
    <location>
        <begin position="432"/>
        <end position="459"/>
    </location>
</feature>
<feature type="short sequence motif" description="Q motif" evidence="3">
    <location>
        <begin position="58"/>
        <end position="86"/>
    </location>
</feature>
<feature type="short sequence motif" description="DEAD box" evidence="1">
    <location>
        <begin position="207"/>
        <end position="210"/>
    </location>
</feature>
<feature type="binding site" evidence="1">
    <location>
        <begin position="102"/>
        <end position="109"/>
    </location>
    <ligand>
        <name>ATP</name>
        <dbReference type="ChEBI" id="CHEBI:30616"/>
    </ligand>
</feature>
<feature type="modified residue" description="Phosphoserine" evidence="9">
    <location>
        <position position="8"/>
    </location>
</feature>
<feature type="modified residue" description="Phosphoserine" evidence="9">
    <location>
        <position position="29"/>
    </location>
</feature>
<feature type="modified residue" description="Phosphoserine" evidence="9">
    <location>
        <position position="450"/>
    </location>
</feature>
<feature type="splice variant" id="VSP_019286" description="In isoform B." evidence="24">
    <location>
        <begin position="1"/>
        <end position="31"/>
    </location>
</feature>
<feature type="mutagenesis site" description="Abolishes interaction with Edc3; when associated with A-284; A-288 and A-292." evidence="13">
    <original>Q</original>
    <variation>A</variation>
    <location>
        <position position="281"/>
    </location>
</feature>
<feature type="mutagenesis site" description="Abolishes interaction with Edc3; when associated with A-281; A-288 and A-292." evidence="13">
    <original>H</original>
    <variation>A</variation>
    <location>
        <position position="284"/>
    </location>
</feature>
<feature type="mutagenesis site" description="In CL-AA; reduced interaction with Gyf and Patr-1 but has no effect on interaction with 4E-T; when associated with A-289." evidence="22">
    <original>C</original>
    <variation>A</variation>
    <location>
        <position position="285"/>
    </location>
</feature>
<feature type="mutagenesis site" description="Abolishes interaction with Edc3; when associated with A-281; A-284 and A-292." evidence="13">
    <original>T</original>
    <variation>A</variation>
    <location>
        <position position="288"/>
    </location>
</feature>
<feature type="mutagenesis site" description="In CL-AA; reduced interaction with Gyf and Patr-1 but has no effect on interaction with 4E-T; when associated with A-285." evidence="22">
    <original>L</original>
    <variation>A</variation>
    <location>
        <position position="289"/>
    </location>
</feature>
<feature type="mutagenesis site" description="Abolishes interaction with Edc3; when associated with A-281; A-284 and A-288." evidence="13">
    <original>K</original>
    <variation>A</variation>
    <location>
        <position position="292"/>
    </location>
</feature>
<feature type="mutagenesis site" description="In LK-AA; reduced interaction with Gyf, Patr-1 and 4E-T; when associated with A-314." evidence="22">
    <original>L</original>
    <variation>A</variation>
    <location>
        <position position="310"/>
    </location>
</feature>
<feature type="mutagenesis site" description="In LK-AA; reduced interaction with Gyf, Patr-1 and 4E-T; when associated with A-310." evidence="22">
    <original>K</original>
    <variation>A</variation>
    <location>
        <position position="314"/>
    </location>
</feature>
<feature type="sequence conflict" description="In Ref. 1; AAA28603." evidence="24" ref="1">
    <original>KLPPKDN</original>
    <variation>NCRQRTT</variation>
    <location>
        <begin position="39"/>
        <end position="45"/>
    </location>
</feature>
<feature type="strand" evidence="27">
    <location>
        <begin position="270"/>
        <end position="276"/>
    </location>
</feature>
<feature type="helix" evidence="27">
    <location>
        <begin position="279"/>
        <end position="281"/>
    </location>
</feature>
<feature type="helix" evidence="27">
    <location>
        <begin position="282"/>
        <end position="292"/>
    </location>
</feature>
<feature type="strand" evidence="27">
    <location>
        <begin position="296"/>
        <end position="301"/>
    </location>
</feature>
<feature type="helix" evidence="27">
    <location>
        <begin position="305"/>
        <end position="318"/>
    </location>
</feature>
<feature type="strand" evidence="27">
    <location>
        <begin position="323"/>
        <end position="325"/>
    </location>
</feature>
<feature type="helix" evidence="27">
    <location>
        <begin position="331"/>
        <end position="343"/>
    </location>
</feature>
<feature type="strand" evidence="27">
    <location>
        <begin position="345"/>
        <end position="351"/>
    </location>
</feature>
<feature type="strand" evidence="27">
    <location>
        <begin position="364"/>
        <end position="371"/>
    </location>
</feature>
<feature type="helix" evidence="27">
    <location>
        <begin position="376"/>
        <end position="383"/>
    </location>
</feature>
<feature type="strand" evidence="27">
    <location>
        <begin position="385"/>
        <end position="390"/>
    </location>
</feature>
<feature type="strand" evidence="27">
    <location>
        <begin position="393"/>
        <end position="399"/>
    </location>
</feature>
<feature type="helix" evidence="27">
    <location>
        <begin position="401"/>
        <end position="403"/>
    </location>
</feature>
<feature type="helix" evidence="27">
    <location>
        <begin position="404"/>
        <end position="414"/>
    </location>
</feature>
<feature type="helix" evidence="27">
    <location>
        <begin position="427"/>
        <end position="429"/>
    </location>
</feature>
<comment type="function">
    <text evidence="5 6 7 8 10 15 16 17 18 19 21">ATP-dependent RNA helicase which is a core component of a variety of ribonucleoprotein complexes (RNPs) that play critical roles in translational repression and mRNA decapping during embryogenesis, oogenesis, neurogenesis and neurotransmission (PubMed:11546740, PubMed:16256742, PubMed:17178403, PubMed:17982591, PubMed:18590813, PubMed:21267420, PubMed:21447556, PubMed:28388438, PubMed:28875934, PubMed:31114929). Recruits core components and translational repressors to some RNP complexes, and mediates RNP aggregation into processing granules such as P-bodies (PubMed:11546740, PubMed:16256742, PubMed:17178403, PubMed:17982591, PubMed:21267420, PubMed:21447556, PubMed:28875934). As part of a RNP complex containing tral, eIF4E1, cup, and pAbp, involved in RNP-mediated translational repression of maternal mRNAs during oogenesis and embryogenesis (PubMed:28875934). As part of a RNP complex containing tral and the RNA localization factors exu and yps, mediates translational silencing of mRNAs such as osk/oskar and bcd/bicoid during their transport to the oocyte in order to prevent their translation until they reach their positional destinations (PubMed:11546740). In neurons and possibly imaginal disks, involved in miRNA-mediated translational repression, possibly in association with components of the piRNA transposon silencing pathway (PubMed:17178403, PubMed:17982591, PubMed:21081899, PubMed:21267420, PubMed:21447556). Involved in RNA localization and protein trafficking in the oocyte (PubMed:11546740, PubMed:16256742). As part of an ER-associated RNP containing tral, cup and yps, required for tral-dependent ER exit site formation and consequently efficient trafficking of proteins such as grk and yl through the secretory pathway (PubMed:16256742). Component of neuron RNPs that mediate transport and translation of neuronal RNAs, including translation repression of synaptic transcripts in preparation for their dendritic targeting (PubMed:17178403, PubMed:21267420, PubMed:28388438). As part of the Atx2-Not1 repressor complex promotes Not1-dependent post-transcriptional gene silencing in adult circadian pacemaker neurons in order to sustain high-amplitude circadian rhythms and Pdf cycling in a per-independent manner (PubMed:28388438). Promotes the interaction between Atx2 and Not1 within the Atx2-Not1 RNP complex (PubMed:28388438). Recruited to the 4EHP-GYF2 complex by Gyf, where it plays a role in 4EHP-GYF2 mediated translational repression and mRNA decay (PubMed:31114929).</text>
</comment>
<comment type="catalytic activity">
    <reaction>
        <text>ATP + H2O = ADP + phosphate + H(+)</text>
        <dbReference type="Rhea" id="RHEA:13065"/>
        <dbReference type="ChEBI" id="CHEBI:15377"/>
        <dbReference type="ChEBI" id="CHEBI:15378"/>
        <dbReference type="ChEBI" id="CHEBI:30616"/>
        <dbReference type="ChEBI" id="CHEBI:43474"/>
        <dbReference type="ChEBI" id="CHEBI:456216"/>
        <dbReference type="EC" id="3.6.4.13"/>
    </reaction>
</comment>
<comment type="subunit">
    <text evidence="4 5 6 7 10 11 13 15 17 18 19 20 21">Conserved component of different types of multiprotein ribonucleoprotein complexes (RNPs) that form distinct germ granules (P-body, nuage, sponge body or polar granules) and P-body-like neuronal RNPs (PubMed:11546740, PubMed:16256742, PubMed:18590813, PubMed:18765641, PubMed:19285948, PubMed:28388438). Consequently it interacts with a wide variety of proteins, some of which appear to be common interactive partners in almost all RNPs types i.e. cup and tral, whereas other interactions are specific to a germ granule/RNP (PubMed:28945271). Core functional components in me31B-containing RNPs include RNA regulatory proteins (such as translational repressor, RNA-decapping and exonuclease proteins), RNA localization proteins and additional proteins depending on the biological context of the RNPs (PubMed:17178403, PubMed:28945271). In the P-body RNPs, interacts with at least the translation repressor proteins tral, cup and Edc3, and the mRNA localization factor yps (PubMed:16256742, PubMed:18590813, PubMed:18765641, PubMed:19285948). Interaction with tral or Edc3 is required for translation repression and possibly RNA decapping; binding to tral and Edc3 is mutually exclusive (PubMed:18765641, PubMed:19285948). In the nuage and germ plasm polar granule RNPs, interacts with at least tral, cup, and additional proteins required for assembly and function of the germ granules such as tud, vas and aub (PubMed:18590813, PubMed:18765641, PubMed:19285948, PubMed:28945271). Interacts (when dimethylated on Arg residues) with tud; interaction is RNA-independent (PubMed:28945271). Component of the osk RNP complex, which is composed of at least me31B, exu, yps, aret/bruno, cup, and the mRNA of osk (PubMed:10662770). Component of the nanos RNP complex, which is composed of at least smg, cup, tral, me31B, the CCR4-NOT complex members Rga/NOT2 and Caf1-55, and the mRNA of nanos (nos) (PubMed:21081899). Interacts with tral and piRNA pathway components papi and AGO3; promotes interaction between nuage RNPs and the piRNA-mediated transposon silencing (PubMed:21447556). Forms a RNP containing at least me31B, eIF4E1, cup, tral and pAbp; this interaction is required for the translational silencing of maternal mRNAs during the maternal-to-zygotic transition (PubMed:28875934). In the sponge body, forms a RNP containing at least me31B, exu, yps and the mRNA of osk; interactions with exu and yps are RNA dependent (PubMed:11546740). Component of a neuronal RNP, at least composed of me31B, tral and Fmr1 (PubMed:17178403). Component of the Atx2-Not1 repressor complex, composed of at least me31B, Atx2, tyf and pAbp (PubMed:28388438). Interacts (via the C-terminus) with Atx2, tyf, pAbp and Lsm12a (PubMed:28388438). Interacts (via RecA-like domain 2) with 4EHP-GYF2 complex member Gyf (via the me31B binding motif) (PubMed:31114929, PubMed:31439631). Interacts with 4E-T, Edc3 and Patr-1 (PubMed:31439631).</text>
</comment>
<comment type="interaction">
    <interactant intactId="EBI-300281">
        <id>P23128</id>
    </interactant>
    <interactant intactId="EBI-95398">
        <id>Q9VMA3</id>
        <label>cup</label>
    </interactant>
    <organismsDiffer>false</organismsDiffer>
    <experiments>3</experiments>
</comment>
<comment type="interaction">
    <interactant intactId="EBI-300281">
        <id>P23128</id>
    </interactant>
    <interactant intactId="EBI-198574">
        <id>P48598</id>
        <label>eIF4E1</label>
    </interactant>
    <organismsDiffer>false</organismsDiffer>
    <experiments>6</experiments>
</comment>
<comment type="interaction">
    <interactant intactId="EBI-300281">
        <id>P23128</id>
    </interactant>
    <interactant intactId="EBI-153564">
        <id>Q9VSG1</id>
        <label>eIF4E3</label>
    </interactant>
    <organismsDiffer>false</organismsDiffer>
    <experiments>4</experiments>
</comment>
<comment type="subcellular location">
    <subcellularLocation>
        <location evidence="5 10 14 20">Cytoplasm</location>
    </subcellularLocation>
    <subcellularLocation>
        <location evidence="5 6 7 10 16 17 20">Cytoplasm</location>
        <location evidence="5 6 7 10 16 17 20">Cytoplasmic ribonucleoprotein granule</location>
    </subcellularLocation>
    <subcellularLocation>
        <location evidence="8 14 17 20">Cytoplasm</location>
        <location evidence="8 14 17 20">P-body</location>
    </subcellularLocation>
    <subcellularLocation>
        <location evidence="6">Endoplasmic reticulum</location>
    </subcellularLocation>
    <subcellularLocation>
        <location evidence="16">Cell projection</location>
        <location evidence="16">Dendrite</location>
    </subcellularLocation>
    <text evidence="5 6 10 16 17 20">Component of a variety of germ granule ribonucleoprotein complexes (RNPs) including the nuage of nurse cells, sponge bodies of nurse cells and early egg chambers in oocytes, as well as polar granules in the germ plasm at the posterior pole of mid-late stage oocytes and in early embryos (PubMed:11546740, PubMed:18590813, PubMed:21267420, PubMed:21447556, PubMed:28945271). Component of an RNP that localizes to discrete subdomains of the ER cytoplasmic surface (PubMed:16256742, PubMed:21267420). Also present in cytoplasmic granules in the cell bodies and neuropil area of the antennal lobes (PubMed:21267420). In the olfactory sensory and projection neurons, granules appear to predominately localize to postsynaptic dendrites (PubMed:21267420).</text>
</comment>
<comment type="alternative products">
    <event type="alternative splicing"/>
    <isoform>
        <id>P23128-1</id>
        <name>A</name>
        <sequence type="displayed"/>
    </isoform>
    <isoform>
        <id>P23128-2</id>
        <name>B</name>
        <sequence type="described" ref="VSP_019286"/>
    </isoform>
</comment>
<comment type="tissue specificity">
    <text evidence="7 16">Ubiquitously expressed throughout the brain (at protein level) (PubMed:17178403, PubMed:21267420). Expressed in the olfactory system including the antennal lobes, projection neurons, local interneurons, mushroom-body Kenyon cells and glial cells (at protein level) (PubMed:21267420).</text>
</comment>
<comment type="developmental stage">
    <text evidence="5 12 14 19">First detected at low levels in the germarium region 2B where it is concentrated in the pro-oocytes (at protein level) (PubMed:11546740). Remains concentrated in the oocyte until mid-oogenesis (at protein level) (PubMed:11546740). In early egg chambers detected in nurse cells and oocytes, and later accumulates at the posterior pole of stage 10 oocytes (at protein level) (PubMed:11546740, PubMed:20452345). Expression levels increas during oogenesis (at protein level) (PubMed:20452345). Expression decreases during the first 5 hours of embryogenesis; expression levels are high during the first 2 hours of embryogenesis then sharply decrease at 2-3 hours and remains low (at protein level) (PubMed:28875934). Ubiquitously expressed in cleavage embryos but is not detected at the cellular blastoderm stage (at protein level) (PubMed:11546740). Expressed both maternally and zygotically (PubMed:1900936).</text>
</comment>
<comment type="PTM">
    <text evidence="20">Symmetrically dimethylated on arginine residues.</text>
</comment>
<comment type="disruption phenotype">
    <text evidence="5 7 8 16 18">Larvae lethal at the second- or third-instar stage (PubMed:11546740). RNAi-mediated knockdown in adult pigment dispersing factor (Pdf)-expressing clock neurons results in poor circadian locomotor rhythms under constant dark (DD) conditions (PubMed:28388438). The axonal terminus of s-LNv neurons display a loss of Pdf circadian daily oscillations which is consistent with their behavioral arrhythmicity (PubMed:28388438). However, there is no effect on the daily oscillations of pir and tim proteins in Pdf neurons (PubMed:28388438). Double knockdown with Atx2 enhances the behavioral arrhythmicity (PubMed:28388438). RNAi-mediated knockdown in the dorsal-most class IV neurons frequently results in defects in terminal dendrite morphology and dendritic tiling (PubMed:17178403). RNAi-mediated knockdown in adult projection neurons increases levels of the translational reporter protein CaMKII in the antennal lobe (PubMed:21267420). RNAi-mediated knockdown in the anterior/posterior boundary of the wing imaginal disk causes loss of DCP1- and pcm-expressing P-bodies (PubMed:17982591).</text>
</comment>
<comment type="similarity">
    <text evidence="25">Belongs to the DEAD box helicase family. DDX6/DHH1 subfamily.</text>
</comment>
<name>DDX6_DROME</name>
<reference key="1">
    <citation type="journal article" date="1991" name="Proc. Natl. Acad. Sci. U.S.A.">
        <title>A second maternally expressed Drosophila gene encodes a putative RNA helicase of the 'DEAD box' family.</title>
        <authorList>
            <person name="de Valoir T."/>
            <person name="Tucker M.A."/>
            <person name="Belikoff E.J."/>
            <person name="Camp L.A."/>
            <person name="Bolduc C."/>
            <person name="Beckingham K."/>
        </authorList>
    </citation>
    <scope>NUCLEOTIDE SEQUENCE [MRNA] (ISOFORM A)</scope>
    <scope>DEVELOPMENTAL STAGE</scope>
</reference>
<reference key="2">
    <citation type="journal article" date="2000" name="Science">
        <title>The genome sequence of Drosophila melanogaster.</title>
        <authorList>
            <person name="Adams M.D."/>
            <person name="Celniker S.E."/>
            <person name="Holt R.A."/>
            <person name="Evans C.A."/>
            <person name="Gocayne J.D."/>
            <person name="Amanatides P.G."/>
            <person name="Scherer S.E."/>
            <person name="Li P.W."/>
            <person name="Hoskins R.A."/>
            <person name="Galle R.F."/>
            <person name="George R.A."/>
            <person name="Lewis S.E."/>
            <person name="Richards S."/>
            <person name="Ashburner M."/>
            <person name="Henderson S.N."/>
            <person name="Sutton G.G."/>
            <person name="Wortman J.R."/>
            <person name="Yandell M.D."/>
            <person name="Zhang Q."/>
            <person name="Chen L.X."/>
            <person name="Brandon R.C."/>
            <person name="Rogers Y.-H.C."/>
            <person name="Blazej R.G."/>
            <person name="Champe M."/>
            <person name="Pfeiffer B.D."/>
            <person name="Wan K.H."/>
            <person name="Doyle C."/>
            <person name="Baxter E.G."/>
            <person name="Helt G."/>
            <person name="Nelson C.R."/>
            <person name="Miklos G.L.G."/>
            <person name="Abril J.F."/>
            <person name="Agbayani A."/>
            <person name="An H.-J."/>
            <person name="Andrews-Pfannkoch C."/>
            <person name="Baldwin D."/>
            <person name="Ballew R.M."/>
            <person name="Basu A."/>
            <person name="Baxendale J."/>
            <person name="Bayraktaroglu L."/>
            <person name="Beasley E.M."/>
            <person name="Beeson K.Y."/>
            <person name="Benos P.V."/>
            <person name="Berman B.P."/>
            <person name="Bhandari D."/>
            <person name="Bolshakov S."/>
            <person name="Borkova D."/>
            <person name="Botchan M.R."/>
            <person name="Bouck J."/>
            <person name="Brokstein P."/>
            <person name="Brottier P."/>
            <person name="Burtis K.C."/>
            <person name="Busam D.A."/>
            <person name="Butler H."/>
            <person name="Cadieu E."/>
            <person name="Center A."/>
            <person name="Chandra I."/>
            <person name="Cherry J.M."/>
            <person name="Cawley S."/>
            <person name="Dahlke C."/>
            <person name="Davenport L.B."/>
            <person name="Davies P."/>
            <person name="de Pablos B."/>
            <person name="Delcher A."/>
            <person name="Deng Z."/>
            <person name="Mays A.D."/>
            <person name="Dew I."/>
            <person name="Dietz S.M."/>
            <person name="Dodson K."/>
            <person name="Doup L.E."/>
            <person name="Downes M."/>
            <person name="Dugan-Rocha S."/>
            <person name="Dunkov B.C."/>
            <person name="Dunn P."/>
            <person name="Durbin K.J."/>
            <person name="Evangelista C.C."/>
            <person name="Ferraz C."/>
            <person name="Ferriera S."/>
            <person name="Fleischmann W."/>
            <person name="Fosler C."/>
            <person name="Gabrielian A.E."/>
            <person name="Garg N.S."/>
            <person name="Gelbart W.M."/>
            <person name="Glasser K."/>
            <person name="Glodek A."/>
            <person name="Gong F."/>
            <person name="Gorrell J.H."/>
            <person name="Gu Z."/>
            <person name="Guan P."/>
            <person name="Harris M."/>
            <person name="Harris N.L."/>
            <person name="Harvey D.A."/>
            <person name="Heiman T.J."/>
            <person name="Hernandez J.R."/>
            <person name="Houck J."/>
            <person name="Hostin D."/>
            <person name="Houston K.A."/>
            <person name="Howland T.J."/>
            <person name="Wei M.-H."/>
            <person name="Ibegwam C."/>
            <person name="Jalali M."/>
            <person name="Kalush F."/>
            <person name="Karpen G.H."/>
            <person name="Ke Z."/>
            <person name="Kennison J.A."/>
            <person name="Ketchum K.A."/>
            <person name="Kimmel B.E."/>
            <person name="Kodira C.D."/>
            <person name="Kraft C.L."/>
            <person name="Kravitz S."/>
            <person name="Kulp D."/>
            <person name="Lai Z."/>
            <person name="Lasko P."/>
            <person name="Lei Y."/>
            <person name="Levitsky A.A."/>
            <person name="Li J.H."/>
            <person name="Li Z."/>
            <person name="Liang Y."/>
            <person name="Lin X."/>
            <person name="Liu X."/>
            <person name="Mattei B."/>
            <person name="McIntosh T.C."/>
            <person name="McLeod M.P."/>
            <person name="McPherson D."/>
            <person name="Merkulov G."/>
            <person name="Milshina N.V."/>
            <person name="Mobarry C."/>
            <person name="Morris J."/>
            <person name="Moshrefi A."/>
            <person name="Mount S.M."/>
            <person name="Moy M."/>
            <person name="Murphy B."/>
            <person name="Murphy L."/>
            <person name="Muzny D.M."/>
            <person name="Nelson D.L."/>
            <person name="Nelson D.R."/>
            <person name="Nelson K.A."/>
            <person name="Nixon K."/>
            <person name="Nusskern D.R."/>
            <person name="Pacleb J.M."/>
            <person name="Palazzolo M."/>
            <person name="Pittman G.S."/>
            <person name="Pan S."/>
            <person name="Pollard J."/>
            <person name="Puri V."/>
            <person name="Reese M.G."/>
            <person name="Reinert K."/>
            <person name="Remington K."/>
            <person name="Saunders R.D.C."/>
            <person name="Scheeler F."/>
            <person name="Shen H."/>
            <person name="Shue B.C."/>
            <person name="Siden-Kiamos I."/>
            <person name="Simpson M."/>
            <person name="Skupski M.P."/>
            <person name="Smith T.J."/>
            <person name="Spier E."/>
            <person name="Spradling A.C."/>
            <person name="Stapleton M."/>
            <person name="Strong R."/>
            <person name="Sun E."/>
            <person name="Svirskas R."/>
            <person name="Tector C."/>
            <person name="Turner R."/>
            <person name="Venter E."/>
            <person name="Wang A.H."/>
            <person name="Wang X."/>
            <person name="Wang Z.-Y."/>
            <person name="Wassarman D.A."/>
            <person name="Weinstock G.M."/>
            <person name="Weissenbach J."/>
            <person name="Williams S.M."/>
            <person name="Woodage T."/>
            <person name="Worley K.C."/>
            <person name="Wu D."/>
            <person name="Yang S."/>
            <person name="Yao Q.A."/>
            <person name="Ye J."/>
            <person name="Yeh R.-F."/>
            <person name="Zaveri J.S."/>
            <person name="Zhan M."/>
            <person name="Zhang G."/>
            <person name="Zhao Q."/>
            <person name="Zheng L."/>
            <person name="Zheng X.H."/>
            <person name="Zhong F.N."/>
            <person name="Zhong W."/>
            <person name="Zhou X."/>
            <person name="Zhu S.C."/>
            <person name="Zhu X."/>
            <person name="Smith H.O."/>
            <person name="Gibbs R.A."/>
            <person name="Myers E.W."/>
            <person name="Rubin G.M."/>
            <person name="Venter J.C."/>
        </authorList>
    </citation>
    <scope>NUCLEOTIDE SEQUENCE [LARGE SCALE GENOMIC DNA]</scope>
    <source>
        <strain>Berkeley</strain>
    </source>
</reference>
<reference key="3">
    <citation type="journal article" date="2002" name="Genome Biol.">
        <title>Annotation of the Drosophila melanogaster euchromatic genome: a systematic review.</title>
        <authorList>
            <person name="Misra S."/>
            <person name="Crosby M.A."/>
            <person name="Mungall C.J."/>
            <person name="Matthews B.B."/>
            <person name="Campbell K.S."/>
            <person name="Hradecky P."/>
            <person name="Huang Y."/>
            <person name="Kaminker J.S."/>
            <person name="Millburn G.H."/>
            <person name="Prochnik S.E."/>
            <person name="Smith C.D."/>
            <person name="Tupy J.L."/>
            <person name="Whitfield E.J."/>
            <person name="Bayraktaroglu L."/>
            <person name="Berman B.P."/>
            <person name="Bettencourt B.R."/>
            <person name="Celniker S.E."/>
            <person name="de Grey A.D.N.J."/>
            <person name="Drysdale R.A."/>
            <person name="Harris N.L."/>
            <person name="Richter J."/>
            <person name="Russo S."/>
            <person name="Schroeder A.J."/>
            <person name="Shu S.Q."/>
            <person name="Stapleton M."/>
            <person name="Yamada C."/>
            <person name="Ashburner M."/>
            <person name="Gelbart W.M."/>
            <person name="Rubin G.M."/>
            <person name="Lewis S.E."/>
        </authorList>
    </citation>
    <scope>GENOME REANNOTATION</scope>
    <scope>ALTERNATIVE SPLICING</scope>
    <source>
        <strain>Berkeley</strain>
    </source>
</reference>
<reference key="4">
    <citation type="journal article" date="2002" name="Genome Biol.">
        <title>A Drosophila full-length cDNA resource.</title>
        <authorList>
            <person name="Stapleton M."/>
            <person name="Carlson J.W."/>
            <person name="Brokstein P."/>
            <person name="Yu C."/>
            <person name="Champe M."/>
            <person name="George R.A."/>
            <person name="Guarin H."/>
            <person name="Kronmiller B."/>
            <person name="Pacleb J.M."/>
            <person name="Park S."/>
            <person name="Wan K.H."/>
            <person name="Rubin G.M."/>
            <person name="Celniker S.E."/>
        </authorList>
    </citation>
    <scope>NUCLEOTIDE SEQUENCE [LARGE SCALE MRNA] (ISOFORM A)</scope>
    <source>
        <strain>Berkeley</strain>
        <tissue>Embryo</tissue>
    </source>
</reference>
<reference key="5">
    <citation type="journal article" date="2000" name="J. Cell Biol.">
        <title>Isolation of a ribonucleoprotein complex involved in mRNA localization in Drosophila oocytes.</title>
        <authorList>
            <person name="Wilhelm J.E."/>
            <person name="Mansfield J."/>
            <person name="Hom-Booher N."/>
            <person name="Wang S."/>
            <person name="Turck C.W."/>
            <person name="Hazelrigg T."/>
            <person name="Vale R.D."/>
        </authorList>
    </citation>
    <scope>IDENTIFICATION IN THE OSK RNP COMPLEX</scope>
</reference>
<reference key="6">
    <citation type="journal article" date="2001" name="Development">
        <title>Me31B silences translation of oocyte-localizing RNAs through the formation of cytoplasmic RNP complex during Drosophila oogenesis.</title>
        <authorList>
            <person name="Nakamura A."/>
            <person name="Amikura R."/>
            <person name="Hanyu K."/>
            <person name="Kobayashi S."/>
        </authorList>
    </citation>
    <scope>FUNCTION</scope>
    <scope>INTERACTION WITH YPS AND EXU</scope>
    <scope>SUBCELLULAR LOCATION</scope>
    <scope>DEVELOPMENTAL STAGE</scope>
    <scope>DISRUPTION PHENOTYPE</scope>
</reference>
<reference key="7">
    <citation type="journal article" date="2005" name="Dev. Cell">
        <title>Efficient protein trafficking requires trailer hitch, a component of a ribonucleoprotein complex localized to the ER in Drosophila.</title>
        <authorList>
            <person name="Wilhelm J.E."/>
            <person name="Buszczak M."/>
            <person name="Sayles S."/>
        </authorList>
    </citation>
    <scope>FUNCTION</scope>
    <scope>INTERACTION WITH TRAL</scope>
    <scope>SUBCELLULAR LOCATION</scope>
</reference>
<reference key="8">
    <citation type="journal article" date="2006" name="Neuron">
        <title>Staufen- and FMRP-containing neuronal RNPs are structurally and functionally related to somatic P bodies.</title>
        <authorList>
            <person name="Barbee S.A."/>
            <person name="Estes P.S."/>
            <person name="Cziko A.M."/>
            <person name="Hillebrand J."/>
            <person name="Luedeman R.A."/>
            <person name="Coller J.M."/>
            <person name="Johnson N."/>
            <person name="Howlett I.C."/>
            <person name="Geng C."/>
            <person name="Ueda R."/>
            <person name="Brand A.H."/>
            <person name="Newbury S.F."/>
            <person name="Wilhelm J.E."/>
            <person name="Levine R.B."/>
            <person name="Nakamura A."/>
            <person name="Parker R."/>
            <person name="Ramaswami M."/>
        </authorList>
    </citation>
    <scope>FUNCTION</scope>
    <scope>IDENTIFICATION IN A COMPLEX WITH TRAL AND FMR1</scope>
    <scope>SUBCELLULAR LOCATION</scope>
    <scope>TISSUE SPECIFICITY</scope>
    <scope>DISRUPTION PHENOTYPE</scope>
</reference>
<reference key="9">
    <citation type="journal article" date="2007" name="ScientificWorldJournal">
        <title>P-body components, microRNA regulation, and synaptic plasticity.</title>
        <authorList>
            <person name="Hillebrand J."/>
            <person name="Barbee S.A."/>
            <person name="Ramaswami M."/>
        </authorList>
    </citation>
    <scope>FUNCTION</scope>
    <scope>SUBCELLULAR LOCATION</scope>
    <scope>DISRUPTION PHENOTYPE</scope>
</reference>
<reference key="10">
    <citation type="journal article" date="2008" name="J. Proteome Res.">
        <title>Phosphoproteome analysis of Drosophila melanogaster embryos.</title>
        <authorList>
            <person name="Zhai B."/>
            <person name="Villen J."/>
            <person name="Beausoleil S.A."/>
            <person name="Mintseris J."/>
            <person name="Gygi S.P."/>
        </authorList>
    </citation>
    <scope>PHOSPHORYLATION [LARGE SCALE ANALYSIS] AT SER-8; SER-29 AND SER-450</scope>
    <scope>IDENTIFICATION BY MASS SPECTROMETRY</scope>
    <source>
        <tissue>Embryo</tissue>
    </source>
</reference>
<reference key="11">
    <citation type="journal article" date="2008" name="Mol. Cell. Biol.">
        <title>Similar modes of interaction enable Trailer Hitch and EDC3 to associate with DCP1 and Me31B in distinct protein complexes.</title>
        <authorList>
            <person name="Tritschler F."/>
            <person name="Eulalio A."/>
            <person name="Helms S."/>
            <person name="Schmidt S."/>
            <person name="Coles M."/>
            <person name="Weichenrieder O."/>
            <person name="Izaurralde E."/>
            <person name="Truffault V."/>
        </authorList>
    </citation>
    <scope>INTERACTION WITH EDC3 AND TRAL</scope>
</reference>
<reference key="12">
    <citation type="journal article" date="2008" name="Mech. Dev.">
        <title>Isolation of new polar granule components in Drosophila reveals P body and ER associated proteins.</title>
        <authorList>
            <person name="Thomson T."/>
            <person name="Liu N."/>
            <person name="Arkov A."/>
            <person name="Lehmann R."/>
            <person name="Lasko P."/>
        </authorList>
    </citation>
    <scope>FUNCTION</scope>
    <scope>INTERACTION WITH TUD AND VAS</scope>
    <scope>SUBCELLULAR LOCATION</scope>
</reference>
<reference key="13">
    <citation type="journal article" date="2009" name="Mol. Cell">
        <title>Structural basis for the mutually exclusive anchoring of P body components EDC3 and Tral to the DEAD box protein DDX6/Me31B.</title>
        <authorList>
            <person name="Tritschler F."/>
            <person name="Braun J.E."/>
            <person name="Eulalio A."/>
            <person name="Truffault V."/>
            <person name="Izaurralde E."/>
            <person name="Weichenrieder O."/>
        </authorList>
    </citation>
    <scope>INTERACTION WITH EDC3</scope>
    <scope>MUTAGENESIS OF GLN-281; HIS-284; THR-288 AND LYS-292</scope>
</reference>
<reference key="14">
    <citation type="journal article" date="2010" name="Front. Neural Circuits">
        <title>The Me31B DEAD-Box Helicase Localizes to Postsynaptic Foci and Regulates Expression of a CaMKII Reporter mRNA in Dendrites of Drosophila Olfactory Projection Neurons.</title>
        <authorList>
            <person name="Hillebrand J."/>
            <person name="Pan K."/>
            <person name="Kokaram A."/>
            <person name="Barbee S."/>
            <person name="Parker R."/>
            <person name="Ramaswami M."/>
        </authorList>
    </citation>
    <scope>FUNCTION</scope>
    <scope>SUBCELLULAR LOCATION</scope>
    <scope>TISSUE SPECIFICITY</scope>
    <scope>DISRUPTION PHENOTYPE</scope>
</reference>
<reference key="15">
    <citation type="journal article" date="2010" name="Exp. Cell Res.">
        <title>Drosophila SMN complex proteins Gemin2, Gemin3, and Gemin5 are components of U bodies.</title>
        <authorList>
            <person name="Cauchi R.J."/>
            <person name="Sanchez-Pulido L."/>
            <person name="Liu J.L."/>
        </authorList>
    </citation>
    <scope>SUBCELLULAR LOCATION</scope>
    <scope>DEVELOPMENTAL STAGE</scope>
    <scope>SIMILARITY WITH DHH1</scope>
</reference>
<reference key="16">
    <citation type="journal article" date="2011" name="Development">
        <title>PAPI, a novel TUDOR-domain protein, complexes with AGO3, ME31B and TRAL in the nuage to silence transposition.</title>
        <authorList>
            <person name="Liu L."/>
            <person name="Qi H."/>
            <person name="Wang J."/>
            <person name="Lin H."/>
        </authorList>
    </citation>
    <scope>FUNCTION</scope>
    <scope>INTERACTION WITH AGO3; PAPI AND TRAL</scope>
    <scope>SUBCELLULAR LOCATION</scope>
</reference>
<reference key="17">
    <citation type="journal article" date="2011" name="EMBO J.">
        <title>Smaug assembles an ATP-dependent stable complex repressing nanos mRNA translation at multiple levels.</title>
        <authorList>
            <person name="Jeske M."/>
            <person name="Moritz B."/>
            <person name="Anders A."/>
            <person name="Wahle E."/>
        </authorList>
    </citation>
    <scope>FUNCTION</scope>
    <scope>IDENTIFICATION IN THE NANOS RNP COMPLEX</scope>
</reference>
<reference key="18">
    <citation type="journal article" date="2017" name="Elife">
        <title>ME31B globally represses maternal mRNAs by two distinct mechanisms during the Drosophila maternal-to-zygotic transition.</title>
        <authorList>
            <person name="Wang M."/>
            <person name="Ly M."/>
            <person name="Lugowski A."/>
            <person name="Laver J.D."/>
            <person name="Lipshitz H.D."/>
            <person name="Smibert C.A."/>
            <person name="Rissland O.S."/>
        </authorList>
    </citation>
    <scope>FUNCTION</scope>
    <scope>IDENTIFICATION IN A COMPLEX WITH EIF4E1; CUP; TRAL AND PABP</scope>
    <scope>DEVELOPMENTAL STAGE</scope>
</reference>
<reference key="19">
    <citation type="journal article" date="2017" name="FEBS Lett.">
        <title>An in vivo proteomic analysis of the Me31B interactome in Drosophila germ granules.</title>
        <authorList>
            <person name="DeHaan H."/>
            <person name="McCambridge A."/>
            <person name="Armstrong B."/>
            <person name="Cruse C."/>
            <person name="Solanki D."/>
            <person name="Trinidad J.C."/>
            <person name="Arkov A.L."/>
            <person name="Gao M."/>
        </authorList>
    </citation>
    <scope>INTERACTION WITH TUD AND AUB</scope>
    <scope>SUBCELLULAR LOCATION</scope>
    <scope>METHYLATION</scope>
</reference>
<reference key="20">
    <citation type="journal article" date="2017" name="Mol. Cell">
        <title>LSM12 and ME31B/DDX6 Define Distinct Modes of Posttranscriptional Regulation by ATAXIN-2 Protein Complex in Drosophila Circadian Pacemaker Neurons.</title>
        <authorList>
            <person name="Lee J."/>
            <person name="Yoo E."/>
            <person name="Lee H."/>
            <person name="Park K."/>
            <person name="Hur J.H."/>
            <person name="Lim C."/>
        </authorList>
    </citation>
    <scope>FUNCTION</scope>
    <scope>IDENTIFICATION IN A COMPLEX WITH ATX2; TYF AND PABP</scope>
    <scope>INTERACTION WITH TYF; PABP; ATX2 AND LSM12A</scope>
    <scope>DISRUPTION PHENOTYPE</scope>
</reference>
<reference key="21">
    <citation type="journal article" date="2019" name="Nucleic Acids Res.">
        <title>Direct role for the Drosophila GIGYF protein in 4EHP-mediated mRNA repression.</title>
        <authorList>
            <person name="Ruscica V."/>
            <person name="Bawankar P."/>
            <person name="Peter D."/>
            <person name="Helms S."/>
            <person name="Igreja C."/>
            <person name="Izaurralde E."/>
        </authorList>
    </citation>
    <scope>FUNCTION</scope>
    <scope>INTERACTION WITH GYF</scope>
</reference>
<reference evidence="26" key="22">
    <citation type="journal article" date="2019" name="Genes Dev.">
        <title>Molecular basis for GIGYF-Me31B complex assembly in 4EHP-mediated translational repression.</title>
        <authorList>
            <person name="Peter D."/>
            <person name="Ruscica V."/>
            <person name="Bawankar P."/>
            <person name="Weber R."/>
            <person name="Helms S."/>
            <person name="Valkov E."/>
            <person name="Igreja C."/>
            <person name="Izaurralde E."/>
        </authorList>
    </citation>
    <scope>X-RAY CRYSTALLOGRAPHY (2.41 ANGSTROMS) OF 264-431</scope>
    <scope>INTERACTION WITH GYF; 4E-T; PATR-1 AND EDC3</scope>
    <scope>MUTAGENESIS OF CYS-285; LEU-289; LEU-310 AND LYS-314</scope>
</reference>
<proteinExistence type="evidence at protein level"/>
<accession>P23128</accession>
<accession>Q8IPC9</accession>
<accession>Q961D2</accession>
<accession>Q9VL17</accession>
<protein>
    <recommendedName>
        <fullName>ATP-dependent RNA helicase me31b</fullName>
        <ecNumber>3.6.4.13</ecNumber>
    </recommendedName>
    <alternativeName>
        <fullName>Maternal expression at 31B</fullName>
    </alternativeName>
</protein>
<keyword id="KW-0002">3D-structure</keyword>
<keyword id="KW-0025">Alternative splicing</keyword>
<keyword id="KW-0067">ATP-binding</keyword>
<keyword id="KW-0966">Cell projection</keyword>
<keyword id="KW-0963">Cytoplasm</keyword>
<keyword id="KW-0256">Endoplasmic reticulum</keyword>
<keyword id="KW-0347">Helicase</keyword>
<keyword id="KW-0378">Hydrolase</keyword>
<keyword id="KW-0488">Methylation</keyword>
<keyword id="KW-0547">Nucleotide-binding</keyword>
<keyword id="KW-0597">Phosphoprotein</keyword>
<keyword id="KW-1185">Reference proteome</keyword>
<keyword id="KW-0678">Repressor</keyword>
<keyword id="KW-0694">RNA-binding</keyword>
<keyword id="KW-0810">Translation regulation</keyword>
<sequence length="459" mass="51945">MMTEKLNSGHTNLTSKGIINDLQIAGNTSDDMGWKSKLKLPPKDNRFKTTDVTDTRGNEFEEFCLKRELLMGIFEKGWERPSPIQEAAIPIALSGKDVLARAKNGTGKTGAYCIPVLEQIDPTKDYIQALVMVPTRELALQTSQICIELAKHLDIRVMVTTGGTILKDDILRIYQKVQLIIATPGRILDLMDKKVADMSHCRILVLDEADKLLSLDFQGMLDHVILKLPKDPQILLFSATFPLTVKNFMEKHLREPYEINLMEELTLKGVTQYYAFVQERQKVHCLNTLFSKLQINQSIIFCNSTQRVELLAKKITELGYCCYYIHAKMAQAHRNRVFHDFRQGLCRNLVCSDLFTRGIDVQAVNVVINFDFPRMAETYLHRIGRSGRFGHLGIAINLITYEDRFDLHRIEKELGTEIKPIPKVIDPALYVANVGASVGDTCNNSDLNNSANEEGNVSK</sequence>
<dbReference type="EC" id="3.6.4.13"/>
<dbReference type="EMBL" id="M59926">
    <property type="protein sequence ID" value="AAA28603.1"/>
    <property type="molecule type" value="mRNA"/>
</dbReference>
<dbReference type="EMBL" id="AE014134">
    <property type="protein sequence ID" value="AAF52881.2"/>
    <property type="molecule type" value="Genomic_DNA"/>
</dbReference>
<dbReference type="EMBL" id="AE014134">
    <property type="protein sequence ID" value="AAN10728.1"/>
    <property type="molecule type" value="Genomic_DNA"/>
</dbReference>
<dbReference type="EMBL" id="AY051663">
    <property type="protein sequence ID" value="AAK93087.1"/>
    <property type="molecule type" value="mRNA"/>
</dbReference>
<dbReference type="PIR" id="A39157">
    <property type="entry name" value="A39157"/>
</dbReference>
<dbReference type="RefSeq" id="NP_523533.2">
    <molecule id="P23128-1"/>
    <property type="nucleotide sequence ID" value="NM_078809.4"/>
</dbReference>
<dbReference type="RefSeq" id="NP_723539.1">
    <molecule id="P23128-2"/>
    <property type="nucleotide sequence ID" value="NM_164898.2"/>
</dbReference>
<dbReference type="PDB" id="6S8R">
    <property type="method" value="X-ray"/>
    <property type="resolution" value="2.41 A"/>
    <property type="chains" value="A=264-431"/>
</dbReference>
<dbReference type="PDBsum" id="6S8R"/>
<dbReference type="SMR" id="P23128"/>
<dbReference type="BioGRID" id="60455">
    <property type="interactions" value="314"/>
</dbReference>
<dbReference type="FunCoup" id="P23128">
    <property type="interactions" value="2239"/>
</dbReference>
<dbReference type="IntAct" id="P23128">
    <property type="interactions" value="21"/>
</dbReference>
<dbReference type="MINT" id="P23128"/>
<dbReference type="STRING" id="7227.FBpp0079565"/>
<dbReference type="iPTMnet" id="P23128"/>
<dbReference type="PaxDb" id="7227-FBpp0079565"/>
<dbReference type="ABCD" id="P23128">
    <property type="antibodies" value="6 sequenced antibodies"/>
</dbReference>
<dbReference type="DNASU" id="34364"/>
<dbReference type="EnsemblMetazoa" id="FBtr0079975">
    <molecule id="P23128-1"/>
    <property type="protein sequence ID" value="FBpp0079565"/>
    <property type="gene ID" value="FBgn0004419"/>
</dbReference>
<dbReference type="EnsemblMetazoa" id="FBtr0079976">
    <molecule id="P23128-2"/>
    <property type="protein sequence ID" value="FBpp0079566"/>
    <property type="gene ID" value="FBgn0004419"/>
</dbReference>
<dbReference type="GeneID" id="34364"/>
<dbReference type="KEGG" id="dme:Dmel_CG4916"/>
<dbReference type="AGR" id="FB:FBgn0004419"/>
<dbReference type="CTD" id="34364"/>
<dbReference type="FlyBase" id="FBgn0004419">
    <property type="gene designation" value="me31B"/>
</dbReference>
<dbReference type="VEuPathDB" id="VectorBase:FBgn0004419"/>
<dbReference type="eggNOG" id="KOG0326">
    <property type="taxonomic scope" value="Eukaryota"/>
</dbReference>
<dbReference type="GeneTree" id="ENSGT00940000170366"/>
<dbReference type="InParanoid" id="P23128"/>
<dbReference type="OMA" id="TYEDRHT"/>
<dbReference type="OrthoDB" id="10265785at2759"/>
<dbReference type="PhylomeDB" id="P23128"/>
<dbReference type="Reactome" id="R-DME-430039">
    <property type="pathway name" value="mRNA decay by 5' to 3' exoribonuclease"/>
</dbReference>
<dbReference type="SignaLink" id="P23128"/>
<dbReference type="BioGRID-ORCS" id="34364">
    <property type="hits" value="1 hit in 1 CRISPR screen"/>
</dbReference>
<dbReference type="CD-CODE" id="19A54EA0">
    <property type="entry name" value="Sponge body"/>
</dbReference>
<dbReference type="CD-CODE" id="1DA11FFF">
    <property type="entry name" value="Germ plasm"/>
</dbReference>
<dbReference type="CD-CODE" id="A6E1D014">
    <property type="entry name" value="P-body"/>
</dbReference>
<dbReference type="ChiTaRS" id="me31B">
    <property type="organism name" value="fly"/>
</dbReference>
<dbReference type="GenomeRNAi" id="34364"/>
<dbReference type="PRO" id="PR:P23128"/>
<dbReference type="Proteomes" id="UP000000803">
    <property type="component" value="Chromosome 2L"/>
</dbReference>
<dbReference type="Bgee" id="FBgn0004419">
    <property type="expression patterns" value="Expressed in egg cell and 203 other cell types or tissues"/>
</dbReference>
<dbReference type="GO" id="GO:0005737">
    <property type="term" value="C:cytoplasm"/>
    <property type="evidence" value="ECO:0000314"/>
    <property type="project" value="FlyBase"/>
</dbReference>
<dbReference type="GO" id="GO:0036464">
    <property type="term" value="C:cytoplasmic ribonucleoprotein granule"/>
    <property type="evidence" value="ECO:0000314"/>
    <property type="project" value="UniProtKB"/>
</dbReference>
<dbReference type="GO" id="GO:0010494">
    <property type="term" value="C:cytoplasmic stress granule"/>
    <property type="evidence" value="ECO:0000318"/>
    <property type="project" value="GO_Central"/>
</dbReference>
<dbReference type="GO" id="GO:0005783">
    <property type="term" value="C:endoplasmic reticulum"/>
    <property type="evidence" value="ECO:0000314"/>
    <property type="project" value="CACAO"/>
</dbReference>
<dbReference type="GO" id="GO:0043025">
    <property type="term" value="C:neuronal cell body"/>
    <property type="evidence" value="ECO:0000314"/>
    <property type="project" value="UniProtKB"/>
</dbReference>
<dbReference type="GO" id="GO:0071598">
    <property type="term" value="C:neuronal ribonucleoprotein granule"/>
    <property type="evidence" value="ECO:0000314"/>
    <property type="project" value="UniProtKB"/>
</dbReference>
<dbReference type="GO" id="GO:0043186">
    <property type="term" value="C:P granule"/>
    <property type="evidence" value="ECO:0000314"/>
    <property type="project" value="FlyBase"/>
</dbReference>
<dbReference type="GO" id="GO:0000932">
    <property type="term" value="C:P-body"/>
    <property type="evidence" value="ECO:0000314"/>
    <property type="project" value="UniProtKB"/>
</dbReference>
<dbReference type="GO" id="GO:0098794">
    <property type="term" value="C:postsynapse"/>
    <property type="evidence" value="ECO:0000314"/>
    <property type="project" value="UniProtKB"/>
</dbReference>
<dbReference type="GO" id="GO:0071683">
    <property type="term" value="C:sensory dendrite"/>
    <property type="evidence" value="ECO:0000314"/>
    <property type="project" value="UniProtKB"/>
</dbReference>
<dbReference type="GO" id="GO:0005524">
    <property type="term" value="F:ATP binding"/>
    <property type="evidence" value="ECO:0007669"/>
    <property type="project" value="UniProtKB-KW"/>
</dbReference>
<dbReference type="GO" id="GO:0016887">
    <property type="term" value="F:ATP hydrolysis activity"/>
    <property type="evidence" value="ECO:0007669"/>
    <property type="project" value="RHEA"/>
</dbReference>
<dbReference type="GO" id="GO:0003729">
    <property type="term" value="F:mRNA binding"/>
    <property type="evidence" value="ECO:0000318"/>
    <property type="project" value="GO_Central"/>
</dbReference>
<dbReference type="GO" id="GO:0000900">
    <property type="term" value="F:mRNA regulatory element binding translation repressor activity"/>
    <property type="evidence" value="ECO:0000315"/>
    <property type="project" value="UniProtKB"/>
</dbReference>
<dbReference type="GO" id="GO:0003723">
    <property type="term" value="F:RNA binding"/>
    <property type="evidence" value="ECO:0000314"/>
    <property type="project" value="FlyBase"/>
</dbReference>
<dbReference type="GO" id="GO:0003724">
    <property type="term" value="F:RNA helicase activity"/>
    <property type="evidence" value="ECO:0007669"/>
    <property type="project" value="UniProtKB-EC"/>
</dbReference>
<dbReference type="GO" id="GO:0000290">
    <property type="term" value="P:deadenylation-dependent decapping of nuclear-transcribed mRNA"/>
    <property type="evidence" value="ECO:0000316"/>
    <property type="project" value="FlyBase"/>
</dbReference>
<dbReference type="GO" id="GO:0031087">
    <property type="term" value="P:deadenylation-independent decapping of nuclear-transcribed mRNA"/>
    <property type="evidence" value="ECO:0000314"/>
    <property type="project" value="FlyBase"/>
</dbReference>
<dbReference type="GO" id="GO:0030707">
    <property type="term" value="P:follicle cell of egg chamber development"/>
    <property type="evidence" value="ECO:0000315"/>
    <property type="project" value="FlyBase"/>
</dbReference>
<dbReference type="GO" id="GO:0046959">
    <property type="term" value="P:habituation"/>
    <property type="evidence" value="ECO:0000315"/>
    <property type="project" value="FlyBase"/>
</dbReference>
<dbReference type="GO" id="GO:0035278">
    <property type="term" value="P:miRNA-mediated gene silencing by inhibition of translation"/>
    <property type="evidence" value="ECO:0000314"/>
    <property type="project" value="UniProtKB"/>
</dbReference>
<dbReference type="GO" id="GO:0035195">
    <property type="term" value="P:miRNA-mediated post-transcriptional gene silencing"/>
    <property type="evidence" value="ECO:0000316"/>
    <property type="project" value="FlyBase"/>
</dbReference>
<dbReference type="GO" id="GO:2000766">
    <property type="term" value="P:negative regulation of cytoplasmic translation"/>
    <property type="evidence" value="ECO:0000315"/>
    <property type="project" value="UniProtKB"/>
</dbReference>
<dbReference type="GO" id="GO:0017148">
    <property type="term" value="P:negative regulation of translation"/>
    <property type="evidence" value="ECO:0000318"/>
    <property type="project" value="GO_Central"/>
</dbReference>
<dbReference type="GO" id="GO:0033962">
    <property type="term" value="P:P-body assembly"/>
    <property type="evidence" value="ECO:0000315"/>
    <property type="project" value="FlyBase"/>
</dbReference>
<dbReference type="GO" id="GO:0007279">
    <property type="term" value="P:pole cell formation"/>
    <property type="evidence" value="ECO:0000316"/>
    <property type="project" value="FlyBase"/>
</dbReference>
<dbReference type="GO" id="GO:0061014">
    <property type="term" value="P:positive regulation of mRNA catabolic process"/>
    <property type="evidence" value="ECO:0000314"/>
    <property type="project" value="FlyBase"/>
</dbReference>
<dbReference type="GO" id="GO:0060148">
    <property type="term" value="P:positive regulation of post-transcriptional gene silencing"/>
    <property type="evidence" value="ECO:0000315"/>
    <property type="project" value="UniProtKB"/>
</dbReference>
<dbReference type="GO" id="GO:0050688">
    <property type="term" value="P:regulation of defense response to virus"/>
    <property type="evidence" value="ECO:0000315"/>
    <property type="project" value="FlyBase"/>
</dbReference>
<dbReference type="GO" id="GO:0150011">
    <property type="term" value="P:regulation of neuron projection arborization"/>
    <property type="evidence" value="ECO:0000315"/>
    <property type="project" value="UniProtKB"/>
</dbReference>
<dbReference type="GO" id="GO:0090328">
    <property type="term" value="P:regulation of olfactory learning"/>
    <property type="evidence" value="ECO:0000315"/>
    <property type="project" value="FlyBase"/>
</dbReference>
<dbReference type="GO" id="GO:0034063">
    <property type="term" value="P:stress granule assembly"/>
    <property type="evidence" value="ECO:0000318"/>
    <property type="project" value="GO_Central"/>
</dbReference>
<dbReference type="CDD" id="cd17940">
    <property type="entry name" value="DEADc_DDX6"/>
    <property type="match status" value="1"/>
</dbReference>
<dbReference type="CDD" id="cd18787">
    <property type="entry name" value="SF2_C_DEAD"/>
    <property type="match status" value="1"/>
</dbReference>
<dbReference type="FunFam" id="3.40.50.300:FF:000114">
    <property type="entry name" value="ATP-dependent RNA helicase DDX6"/>
    <property type="match status" value="1"/>
</dbReference>
<dbReference type="FunFam" id="3.40.50.300:FF:000364">
    <property type="entry name" value="ATP-dependent RNA helicase DDX6"/>
    <property type="match status" value="1"/>
</dbReference>
<dbReference type="Gene3D" id="3.40.50.300">
    <property type="entry name" value="P-loop containing nucleotide triphosphate hydrolases"/>
    <property type="match status" value="2"/>
</dbReference>
<dbReference type="InterPro" id="IPR011545">
    <property type="entry name" value="DEAD/DEAH_box_helicase_dom"/>
</dbReference>
<dbReference type="InterPro" id="IPR014001">
    <property type="entry name" value="Helicase_ATP-bd"/>
</dbReference>
<dbReference type="InterPro" id="IPR001650">
    <property type="entry name" value="Helicase_C-like"/>
</dbReference>
<dbReference type="InterPro" id="IPR027417">
    <property type="entry name" value="P-loop_NTPase"/>
</dbReference>
<dbReference type="InterPro" id="IPR000629">
    <property type="entry name" value="RNA-helicase_DEAD-box_CS"/>
</dbReference>
<dbReference type="InterPro" id="IPR014014">
    <property type="entry name" value="RNA_helicase_DEAD_Q_motif"/>
</dbReference>
<dbReference type="PANTHER" id="PTHR47960">
    <property type="entry name" value="DEAD-BOX ATP-DEPENDENT RNA HELICASE 50"/>
    <property type="match status" value="1"/>
</dbReference>
<dbReference type="Pfam" id="PF00270">
    <property type="entry name" value="DEAD"/>
    <property type="match status" value="1"/>
</dbReference>
<dbReference type="Pfam" id="PF00271">
    <property type="entry name" value="Helicase_C"/>
    <property type="match status" value="1"/>
</dbReference>
<dbReference type="SMART" id="SM00487">
    <property type="entry name" value="DEXDc"/>
    <property type="match status" value="1"/>
</dbReference>
<dbReference type="SMART" id="SM00490">
    <property type="entry name" value="HELICc"/>
    <property type="match status" value="1"/>
</dbReference>
<dbReference type="SUPFAM" id="SSF52540">
    <property type="entry name" value="P-loop containing nucleoside triphosphate hydrolases"/>
    <property type="match status" value="1"/>
</dbReference>
<dbReference type="PROSITE" id="PS00039">
    <property type="entry name" value="DEAD_ATP_HELICASE"/>
    <property type="match status" value="1"/>
</dbReference>
<dbReference type="PROSITE" id="PS51192">
    <property type="entry name" value="HELICASE_ATP_BIND_1"/>
    <property type="match status" value="1"/>
</dbReference>
<dbReference type="PROSITE" id="PS51194">
    <property type="entry name" value="HELICASE_CTER"/>
    <property type="match status" value="1"/>
</dbReference>
<dbReference type="PROSITE" id="PS51195">
    <property type="entry name" value="Q_MOTIF"/>
    <property type="match status" value="1"/>
</dbReference>
<organism>
    <name type="scientific">Drosophila melanogaster</name>
    <name type="common">Fruit fly</name>
    <dbReference type="NCBI Taxonomy" id="7227"/>
    <lineage>
        <taxon>Eukaryota</taxon>
        <taxon>Metazoa</taxon>
        <taxon>Ecdysozoa</taxon>
        <taxon>Arthropoda</taxon>
        <taxon>Hexapoda</taxon>
        <taxon>Insecta</taxon>
        <taxon>Pterygota</taxon>
        <taxon>Neoptera</taxon>
        <taxon>Endopterygota</taxon>
        <taxon>Diptera</taxon>
        <taxon>Brachycera</taxon>
        <taxon>Muscomorpha</taxon>
        <taxon>Ephydroidea</taxon>
        <taxon>Drosophilidae</taxon>
        <taxon>Drosophila</taxon>
        <taxon>Sophophora</taxon>
    </lineage>
</organism>
<gene>
    <name type="primary">me31B</name>
    <name type="ORF">CG4916</name>
</gene>